<proteinExistence type="inferred from homology"/>
<comment type="function">
    <text evidence="1">Produces ATP from ADP in the presence of a proton gradient across the membrane.</text>
</comment>
<comment type="subunit">
    <text>F-type ATPases have 2 components, CF(1) - the catalytic core - and CF(0) - the membrane proton channel. CF(1) has five subunits: alpha(3), beta(3), gamma(1), delta(1), epsilon(1). CF(0) has three main subunits: a, b and c.</text>
</comment>
<comment type="subcellular location">
    <subcellularLocation>
        <location evidence="1">Cell inner membrane</location>
        <topology evidence="1">Peripheral membrane protein</topology>
    </subcellularLocation>
</comment>
<comment type="similarity">
    <text evidence="1">Belongs to the ATPase epsilon chain family.</text>
</comment>
<sequence>MAMTYHLDVVSAEQQMFSGLVEKIQVTGSEGELGIYPGHAPLLTAIKPGMIRIVKQHGHEEFIYLSGGILEVQPGNVTVLADTAIRGQDLDEARAMEAKRKAEEHISSSHGDVDYAQASAELAKAIAQLRVIELTKKAM</sequence>
<accession>Q1R4K3</accession>
<feature type="chain" id="PRO_0000265810" description="ATP synthase epsilon chain">
    <location>
        <begin position="1"/>
        <end position="139"/>
    </location>
</feature>
<gene>
    <name evidence="1" type="primary">atpC</name>
    <name type="ordered locus">UTI89_C4284</name>
</gene>
<dbReference type="EMBL" id="CP000243">
    <property type="protein sequence ID" value="ABE09711.1"/>
    <property type="molecule type" value="Genomic_DNA"/>
</dbReference>
<dbReference type="RefSeq" id="WP_001251965.1">
    <property type="nucleotide sequence ID" value="NZ_CP064825.1"/>
</dbReference>
<dbReference type="SMR" id="Q1R4K3"/>
<dbReference type="KEGG" id="eci:UTI89_C4284"/>
<dbReference type="HOGENOM" id="CLU_084338_2_0_6"/>
<dbReference type="Proteomes" id="UP000001952">
    <property type="component" value="Chromosome"/>
</dbReference>
<dbReference type="GO" id="GO:0005886">
    <property type="term" value="C:plasma membrane"/>
    <property type="evidence" value="ECO:0007669"/>
    <property type="project" value="UniProtKB-SubCell"/>
</dbReference>
<dbReference type="GO" id="GO:0045259">
    <property type="term" value="C:proton-transporting ATP synthase complex"/>
    <property type="evidence" value="ECO:0007669"/>
    <property type="project" value="UniProtKB-KW"/>
</dbReference>
<dbReference type="GO" id="GO:0005524">
    <property type="term" value="F:ATP binding"/>
    <property type="evidence" value="ECO:0007669"/>
    <property type="project" value="UniProtKB-UniRule"/>
</dbReference>
<dbReference type="GO" id="GO:0046933">
    <property type="term" value="F:proton-transporting ATP synthase activity, rotational mechanism"/>
    <property type="evidence" value="ECO:0007669"/>
    <property type="project" value="UniProtKB-UniRule"/>
</dbReference>
<dbReference type="CDD" id="cd12152">
    <property type="entry name" value="F1-ATPase_delta"/>
    <property type="match status" value="1"/>
</dbReference>
<dbReference type="FunFam" id="1.20.5.440:FF:000001">
    <property type="entry name" value="ATP synthase epsilon chain"/>
    <property type="match status" value="1"/>
</dbReference>
<dbReference type="FunFam" id="2.60.15.10:FF:000001">
    <property type="entry name" value="ATP synthase epsilon chain"/>
    <property type="match status" value="1"/>
</dbReference>
<dbReference type="Gene3D" id="1.20.5.440">
    <property type="entry name" value="ATP synthase delta/epsilon subunit, C-terminal domain"/>
    <property type="match status" value="1"/>
</dbReference>
<dbReference type="Gene3D" id="2.60.15.10">
    <property type="entry name" value="F0F1 ATP synthase delta/epsilon subunit, N-terminal"/>
    <property type="match status" value="1"/>
</dbReference>
<dbReference type="HAMAP" id="MF_00530">
    <property type="entry name" value="ATP_synth_epsil_bac"/>
    <property type="match status" value="1"/>
</dbReference>
<dbReference type="InterPro" id="IPR036794">
    <property type="entry name" value="ATP_F1_dsu/esu_C_sf"/>
</dbReference>
<dbReference type="InterPro" id="IPR001469">
    <property type="entry name" value="ATP_synth_F1_dsu/esu"/>
</dbReference>
<dbReference type="InterPro" id="IPR020546">
    <property type="entry name" value="ATP_synth_F1_dsu/esu_N"/>
</dbReference>
<dbReference type="InterPro" id="IPR020547">
    <property type="entry name" value="ATP_synth_F1_esu_C"/>
</dbReference>
<dbReference type="InterPro" id="IPR036771">
    <property type="entry name" value="ATPsynth_dsu/esu_N"/>
</dbReference>
<dbReference type="NCBIfam" id="TIGR01216">
    <property type="entry name" value="ATP_synt_epsi"/>
    <property type="match status" value="1"/>
</dbReference>
<dbReference type="NCBIfam" id="NF001847">
    <property type="entry name" value="PRK00571.1-4"/>
    <property type="match status" value="1"/>
</dbReference>
<dbReference type="PANTHER" id="PTHR13822">
    <property type="entry name" value="ATP SYNTHASE DELTA/EPSILON CHAIN"/>
    <property type="match status" value="1"/>
</dbReference>
<dbReference type="PANTHER" id="PTHR13822:SF10">
    <property type="entry name" value="ATP SYNTHASE EPSILON CHAIN, CHLOROPLASTIC"/>
    <property type="match status" value="1"/>
</dbReference>
<dbReference type="Pfam" id="PF00401">
    <property type="entry name" value="ATP-synt_DE"/>
    <property type="match status" value="1"/>
</dbReference>
<dbReference type="Pfam" id="PF02823">
    <property type="entry name" value="ATP-synt_DE_N"/>
    <property type="match status" value="1"/>
</dbReference>
<dbReference type="SUPFAM" id="SSF46604">
    <property type="entry name" value="Epsilon subunit of F1F0-ATP synthase C-terminal domain"/>
    <property type="match status" value="1"/>
</dbReference>
<dbReference type="SUPFAM" id="SSF51344">
    <property type="entry name" value="Epsilon subunit of F1F0-ATP synthase N-terminal domain"/>
    <property type="match status" value="1"/>
</dbReference>
<protein>
    <recommendedName>
        <fullName evidence="1">ATP synthase epsilon chain</fullName>
    </recommendedName>
    <alternativeName>
        <fullName evidence="1">ATP synthase F1 sector epsilon subunit</fullName>
    </alternativeName>
    <alternativeName>
        <fullName evidence="1">F-ATPase epsilon subunit</fullName>
    </alternativeName>
</protein>
<keyword id="KW-0066">ATP synthesis</keyword>
<keyword id="KW-0997">Cell inner membrane</keyword>
<keyword id="KW-1003">Cell membrane</keyword>
<keyword id="KW-0139">CF(1)</keyword>
<keyword id="KW-0375">Hydrogen ion transport</keyword>
<keyword id="KW-0406">Ion transport</keyword>
<keyword id="KW-0472">Membrane</keyword>
<keyword id="KW-0813">Transport</keyword>
<name>ATPE_ECOUT</name>
<reference key="1">
    <citation type="journal article" date="2006" name="Proc. Natl. Acad. Sci. U.S.A.">
        <title>Identification of genes subject to positive selection in uropathogenic strains of Escherichia coli: a comparative genomics approach.</title>
        <authorList>
            <person name="Chen S.L."/>
            <person name="Hung C.-S."/>
            <person name="Xu J."/>
            <person name="Reigstad C.S."/>
            <person name="Magrini V."/>
            <person name="Sabo A."/>
            <person name="Blasiar D."/>
            <person name="Bieri T."/>
            <person name="Meyer R.R."/>
            <person name="Ozersky P."/>
            <person name="Armstrong J.R."/>
            <person name="Fulton R.S."/>
            <person name="Latreille J.P."/>
            <person name="Spieth J."/>
            <person name="Hooton T.M."/>
            <person name="Mardis E.R."/>
            <person name="Hultgren S.J."/>
            <person name="Gordon J.I."/>
        </authorList>
    </citation>
    <scope>NUCLEOTIDE SEQUENCE [LARGE SCALE GENOMIC DNA]</scope>
    <source>
        <strain>UTI89 / UPEC</strain>
    </source>
</reference>
<evidence type="ECO:0000255" key="1">
    <source>
        <dbReference type="HAMAP-Rule" id="MF_00530"/>
    </source>
</evidence>
<organism>
    <name type="scientific">Escherichia coli (strain UTI89 / UPEC)</name>
    <dbReference type="NCBI Taxonomy" id="364106"/>
    <lineage>
        <taxon>Bacteria</taxon>
        <taxon>Pseudomonadati</taxon>
        <taxon>Pseudomonadota</taxon>
        <taxon>Gammaproteobacteria</taxon>
        <taxon>Enterobacterales</taxon>
        <taxon>Enterobacteriaceae</taxon>
        <taxon>Escherichia</taxon>
    </lineage>
</organism>